<proteinExistence type="inferred from homology"/>
<accession>B2V0F0</accession>
<feature type="chain" id="PRO_1000147244" description="Selenide, water dikinase">
    <location>
        <begin position="1"/>
        <end position="345"/>
    </location>
</feature>
<feature type="active site" evidence="1">
    <location>
        <position position="16"/>
    </location>
</feature>
<feature type="binding site" description="in other chain" evidence="1">
    <location>
        <position position="19"/>
    </location>
    <ligand>
        <name>ATP</name>
        <dbReference type="ChEBI" id="CHEBI:30616"/>
        <note>ligand shared between dimeric partners</note>
    </ligand>
</feature>
<feature type="binding site" description="in other chain" evidence="1">
    <location>
        <begin position="46"/>
        <end position="48"/>
    </location>
    <ligand>
        <name>ATP</name>
        <dbReference type="ChEBI" id="CHEBI:30616"/>
        <note>ligand shared between dimeric partners</note>
    </ligand>
</feature>
<feature type="binding site" evidence="1">
    <location>
        <position position="49"/>
    </location>
    <ligand>
        <name>Mg(2+)</name>
        <dbReference type="ChEBI" id="CHEBI:18420"/>
    </ligand>
</feature>
<feature type="binding site" description="in other chain" evidence="1">
    <location>
        <position position="66"/>
    </location>
    <ligand>
        <name>ATP</name>
        <dbReference type="ChEBI" id="CHEBI:30616"/>
        <note>ligand shared between dimeric partners</note>
    </ligand>
</feature>
<feature type="binding site" description="in other chain" evidence="1">
    <location>
        <position position="89"/>
    </location>
    <ligand>
        <name>ATP</name>
        <dbReference type="ChEBI" id="CHEBI:30616"/>
        <note>ligand shared between dimeric partners</note>
    </ligand>
</feature>
<feature type="binding site" evidence="1">
    <location>
        <position position="89"/>
    </location>
    <ligand>
        <name>Mg(2+)</name>
        <dbReference type="ChEBI" id="CHEBI:18420"/>
    </ligand>
</feature>
<feature type="binding site" evidence="1">
    <location>
        <begin position="136"/>
        <end position="138"/>
    </location>
    <ligand>
        <name>ATP</name>
        <dbReference type="ChEBI" id="CHEBI:30616"/>
        <note>ligand shared between dimeric partners</note>
    </ligand>
</feature>
<feature type="binding site" evidence="1">
    <location>
        <position position="224"/>
    </location>
    <ligand>
        <name>Mg(2+)</name>
        <dbReference type="ChEBI" id="CHEBI:18420"/>
    </ligand>
</feature>
<feature type="site" description="Important for catalytic activity" evidence="1">
    <location>
        <position position="19"/>
    </location>
</feature>
<dbReference type="EC" id="2.7.9.3" evidence="1"/>
<dbReference type="EMBL" id="CP001078">
    <property type="protein sequence ID" value="ACD53367.1"/>
    <property type="molecule type" value="Genomic_DNA"/>
</dbReference>
<dbReference type="RefSeq" id="WP_012451290.1">
    <property type="nucleotide sequence ID" value="NC_010723.1"/>
</dbReference>
<dbReference type="SMR" id="B2V0F0"/>
<dbReference type="KEGG" id="cbt:CLH_0607"/>
<dbReference type="HOGENOM" id="CLU_032859_0_0_9"/>
<dbReference type="GO" id="GO:0005737">
    <property type="term" value="C:cytoplasm"/>
    <property type="evidence" value="ECO:0007669"/>
    <property type="project" value="TreeGrafter"/>
</dbReference>
<dbReference type="GO" id="GO:0005524">
    <property type="term" value="F:ATP binding"/>
    <property type="evidence" value="ECO:0007669"/>
    <property type="project" value="UniProtKB-UniRule"/>
</dbReference>
<dbReference type="GO" id="GO:0000287">
    <property type="term" value="F:magnesium ion binding"/>
    <property type="evidence" value="ECO:0007669"/>
    <property type="project" value="UniProtKB-UniRule"/>
</dbReference>
<dbReference type="GO" id="GO:0004756">
    <property type="term" value="F:selenide, water dikinase activity"/>
    <property type="evidence" value="ECO:0007669"/>
    <property type="project" value="UniProtKB-UniRule"/>
</dbReference>
<dbReference type="GO" id="GO:0016260">
    <property type="term" value="P:selenocysteine biosynthetic process"/>
    <property type="evidence" value="ECO:0007669"/>
    <property type="project" value="InterPro"/>
</dbReference>
<dbReference type="CDD" id="cd02195">
    <property type="entry name" value="SelD"/>
    <property type="match status" value="1"/>
</dbReference>
<dbReference type="FunFam" id="3.30.1330.10:FF:000003">
    <property type="entry name" value="Selenide, water dikinase"/>
    <property type="match status" value="1"/>
</dbReference>
<dbReference type="Gene3D" id="3.90.650.10">
    <property type="entry name" value="PurM-like C-terminal domain"/>
    <property type="match status" value="1"/>
</dbReference>
<dbReference type="Gene3D" id="3.30.1330.10">
    <property type="entry name" value="PurM-like, N-terminal domain"/>
    <property type="match status" value="1"/>
</dbReference>
<dbReference type="HAMAP" id="MF_00625">
    <property type="entry name" value="SelD"/>
    <property type="match status" value="1"/>
</dbReference>
<dbReference type="InterPro" id="IPR010918">
    <property type="entry name" value="PurM-like_C_dom"/>
</dbReference>
<dbReference type="InterPro" id="IPR036676">
    <property type="entry name" value="PurM-like_C_sf"/>
</dbReference>
<dbReference type="InterPro" id="IPR016188">
    <property type="entry name" value="PurM-like_N"/>
</dbReference>
<dbReference type="InterPro" id="IPR036921">
    <property type="entry name" value="PurM-like_N_sf"/>
</dbReference>
<dbReference type="InterPro" id="IPR023061">
    <property type="entry name" value="SelD_I"/>
</dbReference>
<dbReference type="InterPro" id="IPR004536">
    <property type="entry name" value="SPS/SelD"/>
</dbReference>
<dbReference type="NCBIfam" id="NF002098">
    <property type="entry name" value="PRK00943.1"/>
    <property type="match status" value="1"/>
</dbReference>
<dbReference type="NCBIfam" id="TIGR00476">
    <property type="entry name" value="selD"/>
    <property type="match status" value="1"/>
</dbReference>
<dbReference type="PANTHER" id="PTHR10256:SF0">
    <property type="entry name" value="INACTIVE SELENIDE, WATER DIKINASE-LIKE PROTEIN-RELATED"/>
    <property type="match status" value="1"/>
</dbReference>
<dbReference type="PANTHER" id="PTHR10256">
    <property type="entry name" value="SELENIDE, WATER DIKINASE"/>
    <property type="match status" value="1"/>
</dbReference>
<dbReference type="Pfam" id="PF00586">
    <property type="entry name" value="AIRS"/>
    <property type="match status" value="1"/>
</dbReference>
<dbReference type="Pfam" id="PF02769">
    <property type="entry name" value="AIRS_C"/>
    <property type="match status" value="1"/>
</dbReference>
<dbReference type="PIRSF" id="PIRSF036407">
    <property type="entry name" value="Selenphspht_syn"/>
    <property type="match status" value="1"/>
</dbReference>
<dbReference type="SUPFAM" id="SSF56042">
    <property type="entry name" value="PurM C-terminal domain-like"/>
    <property type="match status" value="1"/>
</dbReference>
<dbReference type="SUPFAM" id="SSF55326">
    <property type="entry name" value="PurM N-terminal domain-like"/>
    <property type="match status" value="1"/>
</dbReference>
<protein>
    <recommendedName>
        <fullName evidence="1">Selenide, water dikinase</fullName>
        <ecNumber evidence="1">2.7.9.3</ecNumber>
    </recommendedName>
    <alternativeName>
        <fullName evidence="1">Selenium donor protein</fullName>
    </alternativeName>
    <alternativeName>
        <fullName evidence="1">Selenophosphate synthase</fullName>
    </alternativeName>
</protein>
<name>SELD_CLOBA</name>
<keyword id="KW-0067">ATP-binding</keyword>
<keyword id="KW-0418">Kinase</keyword>
<keyword id="KW-0460">Magnesium</keyword>
<keyword id="KW-0479">Metal-binding</keyword>
<keyword id="KW-0547">Nucleotide-binding</keyword>
<keyword id="KW-0711">Selenium</keyword>
<keyword id="KW-0808">Transferase</keyword>
<reference key="1">
    <citation type="submission" date="2008-05" db="EMBL/GenBank/DDBJ databases">
        <title>Complete genome sequence of Clostridium botulinum E3 str. Alaska E43.</title>
        <authorList>
            <person name="Brinkac L.M."/>
            <person name="Brown J.L."/>
            <person name="Bruce D."/>
            <person name="Detter C."/>
            <person name="Munk C."/>
            <person name="Smith L.A."/>
            <person name="Smith T.J."/>
            <person name="Sutton G."/>
            <person name="Brettin T.S."/>
        </authorList>
    </citation>
    <scope>NUCLEOTIDE SEQUENCE [LARGE SCALE GENOMIC DNA]</scope>
    <source>
        <strain>Alaska E43 / Type E3</strain>
    </source>
</reference>
<sequence length="345" mass="37030">MSKNIKLTSLTKNSGCAAKIGPGVLHSVLSSLPKFEDENLIVGFDTSDDACVYKINDDTVVIKTVDFFPPMVDDPYTFGQVAAANALSDVYAMGGNPSIAMNLICFPSCLDISIMREILAGGYDKVKEAGAVIAGGHTIADPTPKYGLCVSGFARPEEILSNSNAKIGDVIILTKPLGIGIMNTAAKAELIGENKIKEVTSIMSTLNKYAKECTSGLEIHSCTDVTGFGLIGHGYEMASGSKKTIEIFSEYVPIIDGALDYAKMGIIPEGMYNNLDYLKDKFVVEANISQELQDVLIDPQTSGGLLLSLPEKHAKEFLSRIEKFTPYAKIIGQVLDKGDKPIVIK</sequence>
<organism>
    <name type="scientific">Clostridium botulinum (strain Alaska E43 / Type E3)</name>
    <dbReference type="NCBI Taxonomy" id="508767"/>
    <lineage>
        <taxon>Bacteria</taxon>
        <taxon>Bacillati</taxon>
        <taxon>Bacillota</taxon>
        <taxon>Clostridia</taxon>
        <taxon>Eubacteriales</taxon>
        <taxon>Clostridiaceae</taxon>
        <taxon>Clostridium</taxon>
    </lineage>
</organism>
<evidence type="ECO:0000255" key="1">
    <source>
        <dbReference type="HAMAP-Rule" id="MF_00625"/>
    </source>
</evidence>
<comment type="function">
    <text evidence="1">Synthesizes selenophosphate from selenide and ATP.</text>
</comment>
<comment type="catalytic activity">
    <reaction evidence="1">
        <text>hydrogenselenide + ATP + H2O = selenophosphate + AMP + phosphate + 2 H(+)</text>
        <dbReference type="Rhea" id="RHEA:18737"/>
        <dbReference type="ChEBI" id="CHEBI:15377"/>
        <dbReference type="ChEBI" id="CHEBI:15378"/>
        <dbReference type="ChEBI" id="CHEBI:16144"/>
        <dbReference type="ChEBI" id="CHEBI:29317"/>
        <dbReference type="ChEBI" id="CHEBI:30616"/>
        <dbReference type="ChEBI" id="CHEBI:43474"/>
        <dbReference type="ChEBI" id="CHEBI:456215"/>
        <dbReference type="EC" id="2.7.9.3"/>
    </reaction>
</comment>
<comment type="cofactor">
    <cofactor evidence="1">
        <name>Mg(2+)</name>
        <dbReference type="ChEBI" id="CHEBI:18420"/>
    </cofactor>
    <text evidence="1">Binds 1 Mg(2+) ion per monomer.</text>
</comment>
<comment type="subunit">
    <text evidence="1">Homodimer.</text>
</comment>
<comment type="similarity">
    <text evidence="1">Belongs to the selenophosphate synthase 1 family. Class I subfamily.</text>
</comment>
<gene>
    <name evidence="1" type="primary">selD</name>
    <name type="ordered locus">CLH_0607</name>
</gene>